<name>TAL_CHLTR</name>
<evidence type="ECO:0000255" key="1">
    <source>
        <dbReference type="HAMAP-Rule" id="MF_00492"/>
    </source>
</evidence>
<evidence type="ECO:0000305" key="2"/>
<reference key="1">
    <citation type="journal article" date="1998" name="Science">
        <title>Genome sequence of an obligate intracellular pathogen of humans: Chlamydia trachomatis.</title>
        <authorList>
            <person name="Stephens R.S."/>
            <person name="Kalman S."/>
            <person name="Lammel C.J."/>
            <person name="Fan J."/>
            <person name="Marathe R."/>
            <person name="Aravind L."/>
            <person name="Mitchell W.P."/>
            <person name="Olinger L."/>
            <person name="Tatusov R.L."/>
            <person name="Zhao Q."/>
            <person name="Koonin E.V."/>
            <person name="Davis R.W."/>
        </authorList>
    </citation>
    <scope>NUCLEOTIDE SEQUENCE [LARGE SCALE GENOMIC DNA]</scope>
    <source>
        <strain>ATCC VR-885 / DSM 19411 / UW-3/Cx</strain>
    </source>
</reference>
<accession>O84315</accession>
<feature type="chain" id="PRO_0000173589" description="Transaldolase">
    <location>
        <begin position="1"/>
        <end position="327"/>
    </location>
</feature>
<feature type="active site" description="Schiff-base intermediate with substrate" evidence="1">
    <location>
        <position position="132"/>
    </location>
</feature>
<proteinExistence type="inferred from homology"/>
<organism>
    <name type="scientific">Chlamydia trachomatis serovar D (strain ATCC VR-885 / DSM 19411 / UW-3/Cx)</name>
    <dbReference type="NCBI Taxonomy" id="272561"/>
    <lineage>
        <taxon>Bacteria</taxon>
        <taxon>Pseudomonadati</taxon>
        <taxon>Chlamydiota</taxon>
        <taxon>Chlamydiia</taxon>
        <taxon>Chlamydiales</taxon>
        <taxon>Chlamydiaceae</taxon>
        <taxon>Chlamydia/Chlamydophila group</taxon>
        <taxon>Chlamydia</taxon>
    </lineage>
</organism>
<protein>
    <recommendedName>
        <fullName evidence="1">Transaldolase</fullName>
        <ecNumber evidence="1">2.2.1.2</ecNumber>
    </recommendedName>
</protein>
<sequence>MSSQFDQLKLWSVLVGDTGDPALIKTLGVQDATTNPSLILKVAQEPKYQSMLTEAISWGIRQNGDDVQTLTFVLDKIQVNLGLEILKHVPGRVSLEIDARLSFNTEAMVQRAIFLSQLFEKMGGDKKRLLVKIPGTWEGICAAEVLESQGIACNVTLIFNLVQAIAAAKAKVTLVSPFVGRIYDWWIAAYGAEGYSIEADPGVASVANIYSYYKKFDIPTQIMAASFRTKEQVLALAGCDFLTISPKLLEELKKDQQPVERKLSVEEAKKLDIQPVELSESVFRFLMNEDAMATEKLAEGIRIFSGDTQILESAVTEFIRQIAAQEA</sequence>
<dbReference type="EC" id="2.2.1.2" evidence="1"/>
<dbReference type="EMBL" id="AE001273">
    <property type="protein sequence ID" value="AAC67906.1"/>
    <property type="molecule type" value="Genomic_DNA"/>
</dbReference>
<dbReference type="PIR" id="G71531">
    <property type="entry name" value="G71531"/>
</dbReference>
<dbReference type="RefSeq" id="NP_219818.1">
    <property type="nucleotide sequence ID" value="NC_000117.1"/>
</dbReference>
<dbReference type="RefSeq" id="WP_009871660.1">
    <property type="nucleotide sequence ID" value="NC_000117.1"/>
</dbReference>
<dbReference type="SMR" id="O84315"/>
<dbReference type="FunCoup" id="O84315">
    <property type="interactions" value="139"/>
</dbReference>
<dbReference type="STRING" id="272561.CT_313"/>
<dbReference type="EnsemblBacteria" id="AAC67906">
    <property type="protein sequence ID" value="AAC67906"/>
    <property type="gene ID" value="CT_313"/>
</dbReference>
<dbReference type="GeneID" id="884811"/>
<dbReference type="KEGG" id="ctr:CT_313"/>
<dbReference type="PATRIC" id="fig|272561.5.peg.335"/>
<dbReference type="HOGENOM" id="CLU_047470_0_1_0"/>
<dbReference type="InParanoid" id="O84315"/>
<dbReference type="OrthoDB" id="9807051at2"/>
<dbReference type="UniPathway" id="UPA00115">
    <property type="reaction ID" value="UER00414"/>
</dbReference>
<dbReference type="Proteomes" id="UP000000431">
    <property type="component" value="Chromosome"/>
</dbReference>
<dbReference type="GO" id="GO:0005737">
    <property type="term" value="C:cytoplasm"/>
    <property type="evidence" value="ECO:0007669"/>
    <property type="project" value="UniProtKB-SubCell"/>
</dbReference>
<dbReference type="GO" id="GO:0004801">
    <property type="term" value="F:transaldolase activity"/>
    <property type="evidence" value="ECO:0000250"/>
    <property type="project" value="UniProtKB"/>
</dbReference>
<dbReference type="GO" id="GO:0005975">
    <property type="term" value="P:carbohydrate metabolic process"/>
    <property type="evidence" value="ECO:0007669"/>
    <property type="project" value="InterPro"/>
</dbReference>
<dbReference type="GO" id="GO:0006098">
    <property type="term" value="P:pentose-phosphate shunt"/>
    <property type="evidence" value="ECO:0007669"/>
    <property type="project" value="UniProtKB-UniRule"/>
</dbReference>
<dbReference type="CDD" id="cd00957">
    <property type="entry name" value="Transaldolase_TalAB"/>
    <property type="match status" value="1"/>
</dbReference>
<dbReference type="FunFam" id="3.20.20.70:FF:000163">
    <property type="entry name" value="Transaldolase B"/>
    <property type="match status" value="1"/>
</dbReference>
<dbReference type="Gene3D" id="3.20.20.70">
    <property type="entry name" value="Aldolase class I"/>
    <property type="match status" value="1"/>
</dbReference>
<dbReference type="HAMAP" id="MF_00492">
    <property type="entry name" value="Transaldolase_1"/>
    <property type="match status" value="1"/>
</dbReference>
<dbReference type="InterPro" id="IPR013785">
    <property type="entry name" value="Aldolase_TIM"/>
</dbReference>
<dbReference type="InterPro" id="IPR001585">
    <property type="entry name" value="TAL/FSA"/>
</dbReference>
<dbReference type="InterPro" id="IPR004730">
    <property type="entry name" value="Transaldolase_1"/>
</dbReference>
<dbReference type="InterPro" id="IPR018225">
    <property type="entry name" value="Transaldolase_AS"/>
</dbReference>
<dbReference type="NCBIfam" id="TIGR00874">
    <property type="entry name" value="talAB"/>
    <property type="match status" value="1"/>
</dbReference>
<dbReference type="PANTHER" id="PTHR10683">
    <property type="entry name" value="TRANSALDOLASE"/>
    <property type="match status" value="1"/>
</dbReference>
<dbReference type="PANTHER" id="PTHR10683:SF18">
    <property type="entry name" value="TRANSALDOLASE"/>
    <property type="match status" value="1"/>
</dbReference>
<dbReference type="Pfam" id="PF00923">
    <property type="entry name" value="TAL_FSA"/>
    <property type="match status" value="1"/>
</dbReference>
<dbReference type="SUPFAM" id="SSF51569">
    <property type="entry name" value="Aldolase"/>
    <property type="match status" value="1"/>
</dbReference>
<dbReference type="PROSITE" id="PS01054">
    <property type="entry name" value="TRANSALDOLASE_1"/>
    <property type="match status" value="1"/>
</dbReference>
<dbReference type="PROSITE" id="PS00958">
    <property type="entry name" value="TRANSALDOLASE_2"/>
    <property type="match status" value="1"/>
</dbReference>
<keyword id="KW-0963">Cytoplasm</keyword>
<keyword id="KW-0570">Pentose shunt</keyword>
<keyword id="KW-1185">Reference proteome</keyword>
<keyword id="KW-0704">Schiff base</keyword>
<keyword id="KW-0808">Transferase</keyword>
<gene>
    <name evidence="1" type="primary">tal</name>
    <name type="ordered locus">CT_313</name>
</gene>
<comment type="function">
    <text evidence="1">Transaldolase is important for the balance of metabolites in the pentose-phosphate pathway.</text>
</comment>
<comment type="catalytic activity">
    <reaction evidence="1">
        <text>D-sedoheptulose 7-phosphate + D-glyceraldehyde 3-phosphate = D-erythrose 4-phosphate + beta-D-fructose 6-phosphate</text>
        <dbReference type="Rhea" id="RHEA:17053"/>
        <dbReference type="ChEBI" id="CHEBI:16897"/>
        <dbReference type="ChEBI" id="CHEBI:57483"/>
        <dbReference type="ChEBI" id="CHEBI:57634"/>
        <dbReference type="ChEBI" id="CHEBI:59776"/>
        <dbReference type="EC" id="2.2.1.2"/>
    </reaction>
</comment>
<comment type="pathway">
    <text evidence="1">Carbohydrate degradation; pentose phosphate pathway; D-glyceraldehyde 3-phosphate and beta-D-fructose 6-phosphate from D-ribose 5-phosphate and D-xylulose 5-phosphate (non-oxidative stage): step 2/3.</text>
</comment>
<comment type="subcellular location">
    <subcellularLocation>
        <location evidence="1">Cytoplasm</location>
    </subcellularLocation>
</comment>
<comment type="similarity">
    <text evidence="1 2">Belongs to the transaldolase family. Type 1 subfamily.</text>
</comment>